<organism evidence="10">
    <name type="scientific">Anopheles gambiae</name>
    <name type="common">African malaria mosquito</name>
    <dbReference type="NCBI Taxonomy" id="7165"/>
    <lineage>
        <taxon>Eukaryota</taxon>
        <taxon>Metazoa</taxon>
        <taxon>Ecdysozoa</taxon>
        <taxon>Arthropoda</taxon>
        <taxon>Hexapoda</taxon>
        <taxon>Insecta</taxon>
        <taxon>Pterygota</taxon>
        <taxon>Neoptera</taxon>
        <taxon>Endopterygota</taxon>
        <taxon>Diptera</taxon>
        <taxon>Nematocera</taxon>
        <taxon>Culicoidea</taxon>
        <taxon>Culicidae</taxon>
        <taxon>Anophelinae</taxon>
        <taxon>Anopheles</taxon>
    </lineage>
</organism>
<sequence length="391" mass="43783">MCRGLSAVLILLVSLSAQLHVVVGEEAPKPEKEICGLKVGRLLDSVKGWLSVSQQEKCPLNKYCENKIQADQYNLVPLTCIRWRSLNPASPTGSLGGKDVVSKIDAAMSNFKTLFEPMKADLAKLEEEVKRQVLDAWKALEPLQKEVYRSTLASGRIERAVFYSFMEMGDNVKLDNYFQPANVEELLKYAWALPMHKKQRSMYDLIGQLVQSSKSPMLQTLHAVELATVVNPELENRENLLNDQVVQLRDNLYKNSFATLVSIARHFPDHFDTLRQRLFKLPDGSKPGADTLPNIVNFIAQLPSDELRLSSVDLLLQSLTAENGTLVQDPEYVYRLSQLAHAMPSLVDVKAHPDLQQSVDDLMAKFNTPIDGKTLQYFQNIGISPSSSVAT</sequence>
<evidence type="ECO:0000255" key="1"/>
<evidence type="ECO:0000255" key="2">
    <source>
        <dbReference type="PROSITE-ProRule" id="PRU00498"/>
    </source>
</evidence>
<evidence type="ECO:0000269" key="3">
    <source>
    </source>
</evidence>
<evidence type="ECO:0000269" key="4">
    <source>
    </source>
</evidence>
<evidence type="ECO:0000269" key="5">
    <source>
    </source>
</evidence>
<evidence type="ECO:0000303" key="6">
    <source>
    </source>
</evidence>
<evidence type="ECO:0000303" key="7">
    <source>
    </source>
</evidence>
<evidence type="ECO:0000305" key="8"/>
<evidence type="ECO:0000312" key="9">
    <source>
        <dbReference type="EMBL" id="AAL68795.1"/>
    </source>
</evidence>
<evidence type="ECO:0000312" key="10">
    <source>
        <dbReference type="EMBL" id="EAA01413.3"/>
    </source>
</evidence>
<evidence type="ECO:0000312" key="11">
    <source>
        <dbReference type="Proteomes" id="UP000007062"/>
    </source>
</evidence>
<name>TRIO_ANOGA</name>
<feature type="signal peptide" evidence="1">
    <location>
        <begin position="1"/>
        <end position="24"/>
    </location>
</feature>
<feature type="chain" id="PRO_5014587901" description="Salivary protein TRIO" evidence="1">
    <location>
        <begin position="25"/>
        <end position="391"/>
    </location>
</feature>
<feature type="glycosylation site" description="N-linked (GlcNAc...) asparagine" evidence="2">
    <location>
        <position position="323"/>
    </location>
</feature>
<feature type="sequence conflict" description="In Ref. 3; AAL68795." evidence="8" ref="3">
    <original>V</original>
    <variation>I</variation>
    <location>
        <position position="13"/>
    </location>
</feature>
<feature type="sequence conflict" description="In Ref. 3; AAL68795." evidence="8" ref="3">
    <original>L</original>
    <variation>Q</variation>
    <location>
        <position position="86"/>
    </location>
</feature>
<feature type="sequence conflict" description="In Ref. 3; AAL68795." evidence="8" ref="3">
    <original>T</original>
    <variation>A</variation>
    <location>
        <position position="92"/>
    </location>
</feature>
<feature type="sequence conflict" description="In Ref. 3; AAL68795." evidence="8" ref="3">
    <original>V</original>
    <variation>A</variation>
    <location>
        <position position="147"/>
    </location>
</feature>
<feature type="sequence conflict" description="In Ref. 3; AAL68795." evidence="8" ref="3">
    <original>K</original>
    <variation>R</variation>
    <location>
        <position position="173"/>
    </location>
</feature>
<feature type="sequence conflict" description="In Ref. 3; AAL68795." evidence="8" ref="3">
    <original>V</original>
    <variation>I</variation>
    <location>
        <position position="312"/>
    </location>
</feature>
<feature type="sequence conflict" description="In Ref. 3; AAL68795." evidence="8" ref="3">
    <original>T</original>
    <variation>A</variation>
    <location>
        <position position="391"/>
    </location>
</feature>
<reference evidence="11" key="1">
    <citation type="journal article" date="2002" name="Science">
        <title>The genome sequence of the malaria mosquito Anopheles gambiae.</title>
        <authorList>
            <person name="Holt R.A."/>
            <person name="Subramanian G.M."/>
            <person name="Halpern A."/>
            <person name="Sutton G.G."/>
            <person name="Charlab R."/>
            <person name="Nusskern D.R."/>
            <person name="Wincker P."/>
            <person name="Clark A.G."/>
            <person name="Ribeiro J.M.C."/>
            <person name="Wides R."/>
            <person name="Salzberg S.L."/>
            <person name="Loftus B.J."/>
            <person name="Yandell M.D."/>
            <person name="Majoros W.H."/>
            <person name="Rusch D.B."/>
            <person name="Lai Z."/>
            <person name="Kraft C.L."/>
            <person name="Abril J.F."/>
            <person name="Anthouard V."/>
            <person name="Arensburger P."/>
            <person name="Atkinson P.W."/>
            <person name="Baden H."/>
            <person name="de Berardinis V."/>
            <person name="Baldwin D."/>
            <person name="Benes V."/>
            <person name="Biedler J."/>
            <person name="Blass C."/>
            <person name="Bolanos R."/>
            <person name="Boscus D."/>
            <person name="Barnstead M."/>
            <person name="Cai S."/>
            <person name="Center A."/>
            <person name="Chaturverdi K."/>
            <person name="Christophides G.K."/>
            <person name="Chrystal M.A.M."/>
            <person name="Clamp M."/>
            <person name="Cravchik A."/>
            <person name="Curwen V."/>
            <person name="Dana A."/>
            <person name="Delcher A."/>
            <person name="Dew I."/>
            <person name="Evans C.A."/>
            <person name="Flanigan M."/>
            <person name="Grundschober-Freimoser A."/>
            <person name="Friedli L."/>
            <person name="Gu Z."/>
            <person name="Guan P."/>
            <person name="Guigo R."/>
            <person name="Hillenmeyer M.E."/>
            <person name="Hladun S.L."/>
            <person name="Hogan J.R."/>
            <person name="Hong Y.S."/>
            <person name="Hoover J."/>
            <person name="Jaillon O."/>
            <person name="Ke Z."/>
            <person name="Kodira C.D."/>
            <person name="Kokoza E."/>
            <person name="Koutsos A."/>
            <person name="Letunic I."/>
            <person name="Levitsky A.A."/>
            <person name="Liang Y."/>
            <person name="Lin J.-J."/>
            <person name="Lobo N.F."/>
            <person name="Lopez J.R."/>
            <person name="Malek J.A."/>
            <person name="McIntosh T.C."/>
            <person name="Meister S."/>
            <person name="Miller J.R."/>
            <person name="Mobarry C."/>
            <person name="Mongin E."/>
            <person name="Murphy S.D."/>
            <person name="O'Brochta D.A."/>
            <person name="Pfannkoch C."/>
            <person name="Qi R."/>
            <person name="Regier M.A."/>
            <person name="Remington K."/>
            <person name="Shao H."/>
            <person name="Sharakhova M.V."/>
            <person name="Sitter C.D."/>
            <person name="Shetty J."/>
            <person name="Smith T.J."/>
            <person name="Strong R."/>
            <person name="Sun J."/>
            <person name="Thomasova D."/>
            <person name="Ton L.Q."/>
            <person name="Topalis P."/>
            <person name="Tu Z.J."/>
            <person name="Unger M.F."/>
            <person name="Walenz B."/>
            <person name="Wang A.H."/>
            <person name="Wang J."/>
            <person name="Wang M."/>
            <person name="Wang X."/>
            <person name="Woodford K.J."/>
            <person name="Wortman J.R."/>
            <person name="Wu M."/>
            <person name="Yao A."/>
            <person name="Zdobnov E.M."/>
            <person name="Zhang H."/>
            <person name="Zhao Q."/>
            <person name="Zhao S."/>
            <person name="Zhu S.C."/>
            <person name="Zhimulev I."/>
            <person name="Coluzzi M."/>
            <person name="della Torre A."/>
            <person name="Roth C.W."/>
            <person name="Louis C."/>
            <person name="Kalush F."/>
            <person name="Mural R.J."/>
            <person name="Myers E.W."/>
            <person name="Adams M.D."/>
            <person name="Smith H.O."/>
            <person name="Broder S."/>
            <person name="Gardner M.J."/>
            <person name="Fraser C.M."/>
            <person name="Birney E."/>
            <person name="Bork P."/>
            <person name="Brey P.T."/>
            <person name="Venter J.C."/>
            <person name="Weissenbach J."/>
            <person name="Kafatos F.C."/>
            <person name="Collins F.H."/>
            <person name="Hoffman S.L."/>
        </authorList>
    </citation>
    <scope>NUCLEOTIDE SEQUENCE [LARGE SCALE GENOMIC DNA]</scope>
    <source>
        <strain evidence="11">PEST</strain>
    </source>
</reference>
<reference evidence="10" key="2">
    <citation type="journal article" date="2007" name="Genome Biol.">
        <title>Update of the Anopheles gambiae PEST genome assembly.</title>
        <authorList>
            <person name="Sharakhova M.V."/>
            <person name="Hammond M.P."/>
            <person name="Lobo N.F."/>
            <person name="Krzywinski J."/>
            <person name="Unger M.F."/>
            <person name="Hillenmeyer M.E."/>
            <person name="Bruggner R.V."/>
            <person name="Birney E."/>
            <person name="Collins F.H."/>
        </authorList>
    </citation>
    <scope>NUCLEOTIDE SEQUENCE [LARGE SCALE GENOMIC DNA]</scope>
    <source>
        <strain evidence="10">PEST</strain>
    </source>
</reference>
<reference evidence="9" key="3">
    <citation type="journal article" date="2002" name="J. Exp. Biol.">
        <title>Toward a catalog for the transcripts and proteins (sialome) from the salivary gland of the malaria vector Anopheles gambiae.</title>
        <authorList>
            <person name="Francischetti I.M."/>
            <person name="Valenzuela J.G."/>
            <person name="Pham V.M."/>
            <person name="Garfield M.K."/>
            <person name="Ribeiro J.M."/>
        </authorList>
    </citation>
    <scope>NUCLEOTIDE SEQUENCE [LARGE SCALE MRNA]</scope>
</reference>
<reference evidence="8" key="4">
    <citation type="journal article" date="2018" name="Cell Host Microbe">
        <title>Immunization with AgTRIO, a Protein in Anopheles Saliva, Contributes to Protection against Plasmodium Infection in Mice.</title>
        <authorList>
            <person name="Dragovic S.M."/>
            <person name="Agunbiade T.A."/>
            <person name="Freudzon M."/>
            <person name="Yang J."/>
            <person name="Hastings A.K."/>
            <person name="Schleicher T.R."/>
            <person name="Zhou X."/>
            <person name="Craft S."/>
            <person name="Chuang Y.M."/>
            <person name="Gonzalez F."/>
            <person name="Li Y."/>
            <person name="Hrebikova G."/>
            <person name="Tripathi A."/>
            <person name="Mlambo G."/>
            <person name="Almeras L."/>
            <person name="Ploss A."/>
            <person name="Dimopoulos G."/>
            <person name="Fikrig E."/>
        </authorList>
    </citation>
    <scope>FUNCTION (MICROBIAL INFECTION)</scope>
    <scope>SUBCELLULAR LOCATION</scope>
    <scope>TISSUE SPECIFICITY</scope>
    <scope>INDUCTION (MICROBIAL INFECTION)</scope>
</reference>
<reference evidence="8" key="5">
    <citation type="journal article" date="2019" name="Infect. Immun.">
        <title>Anopheles gambiae Lacking AgTRIO Inefficiently Transmits Plasmodium berghei to Mice.</title>
        <authorList>
            <person name="Chuang Y.M."/>
            <person name="Freudzon M."/>
            <person name="Yang J."/>
            <person name="Dong Y."/>
            <person name="Dimopoulos G."/>
            <person name="Fikrig E."/>
        </authorList>
    </citation>
    <scope>FUNCTION</scope>
    <scope>FUNCTION (MICROBIAL INFECTION)</scope>
    <scope>DISRUPTION PHENOTYPE</scope>
    <scope>DISRUPTION PHENOTYPE (MICROBIAL INFECTION)</scope>
</reference>
<reference evidence="8" key="6">
    <citation type="journal article" date="2024" name="Cell Rep.">
        <title>Anopheles gambiae lacking AgTRIO probe inefficiently on a mammalian host.</title>
        <authorList>
            <person name="Chuang Y.M."/>
            <person name="Dong Y."/>
            <person name="Stone H."/>
            <person name="Abouneameh S."/>
            <person name="Tang X.D."/>
            <person name="Raduwan H."/>
            <person name="Dimopoulos G."/>
            <person name="Fikrig E."/>
        </authorList>
    </citation>
    <scope>FUNCTION</scope>
    <scope>FUNCTION (MICROBIAL INFECTION)</scope>
</reference>
<comment type="function">
    <text evidence="4 5">Required for efficient probing on a mammalian host (PubMed:39126653). Alters the local inflammatory response in the host skin following a mosquito bite by suppressing TNF-alpha/TNF expression (PubMed:31285253).</text>
</comment>
<comment type="function">
    <text evidence="3 4 5">(Microbial infection) Contributes to optimal transmission of Plasmodium berghei sporozoites to mice.</text>
</comment>
<comment type="function">
    <text evidence="3">(Microbial infection) Contributes to optimal transmission of Plasmodium falciparum sporozoites to mammalian host.</text>
</comment>
<comment type="subcellular location">
    <subcellularLocation>
        <location evidence="3">Secreted</location>
    </subcellularLocation>
</comment>
<comment type="tissue specificity">
    <text evidence="3">Female salivary gland (at protein level) (PubMed:29649443). Female saliva (at protein level) (PubMed:29649443). Not detected in female midgut, head and carcass (at protein level) (PubMed:29649443). Not detected in male tissues (at protein level) (PubMed:29649443).</text>
</comment>
<comment type="induction">
    <text evidence="3">(Microbial infection) Up-regulated in female salivary gland following infection with P.berghei sporozoites.</text>
</comment>
<comment type="disruption phenotype">
    <text evidence="4">RNAi-mediated knockdown results in increased TNF-alpha/TNF levels at the bite sites in the host.</text>
</comment>
<comment type="disruption phenotype">
    <text evidence="4">(Microbial infection) RNAi-mediated knockdown has no significant effects on P.berghei infection levels in mosquito salivary glands (PubMed:31285253). P.berghei sporozoites isolated from knockdown mosquitoes and injected into mice via intradermal injection cause lower levels of hepatic infection in mice (PubMed:31285253).</text>
</comment>
<comment type="miscellaneous">
    <text evidence="3">Mice that received antiserum against the protein show a decreased parasite burden in the liver after exposure to P.berghei-infected or P.falciparum-infected mosquitoes (PubMed:29649443). Antibodies against the protein are not generally elicited by natural mosquito bites; however, active immunization of mice leads to productive antibody response (PubMed:29649443). Active immunization of mice with the protein results in reduced parasite burden in the liver and reduced parasitemia after exposure to P.berghei-infected mosquitoes (PubMed:29649443). Antiserum against the protein decreases P.berghei sporozoite motility in the murine skin (PubMed:29649443).</text>
</comment>
<gene>
    <name evidence="10" type="ORF">AgaP_AGAP001374</name>
</gene>
<dbReference type="EMBL" id="AAAB01008987">
    <property type="protein sequence ID" value="EAA01413.3"/>
    <property type="molecule type" value="Genomic_DNA"/>
</dbReference>
<dbReference type="EMBL" id="AF457565">
    <property type="protein sequence ID" value="AAL68795.1"/>
    <property type="molecule type" value="mRNA"/>
</dbReference>
<dbReference type="RefSeq" id="XP_321765.2">
    <property type="nucleotide sequence ID" value="XM_321765.3"/>
</dbReference>
<dbReference type="SMR" id="Q7PUJ5"/>
<dbReference type="STRING" id="7165.Q7PUJ5"/>
<dbReference type="PaxDb" id="7165-AGAP001374-PA"/>
<dbReference type="EnsemblMetazoa" id="AGAP001374-RA">
    <property type="protein sequence ID" value="AGAP001374-PA"/>
    <property type="gene ID" value="AGAP001374"/>
</dbReference>
<dbReference type="KEGG" id="aga:1281804"/>
<dbReference type="VEuPathDB" id="VectorBase:AGAMI1_013277"/>
<dbReference type="VEuPathDB" id="VectorBase:AGAP001374"/>
<dbReference type="HOGENOM" id="CLU_706398_0_0_1"/>
<dbReference type="OMA" id="IRCEILA"/>
<dbReference type="Proteomes" id="UP000007062">
    <property type="component" value="Chromosome 2R"/>
</dbReference>
<dbReference type="GO" id="GO:0005576">
    <property type="term" value="C:extracellular region"/>
    <property type="evidence" value="ECO:0007669"/>
    <property type="project" value="UniProtKB-SubCell"/>
</dbReference>
<protein>
    <recommendedName>
        <fullName evidence="8">Salivary protein TRIO</fullName>
        <shortName evidence="6 7">AgTRIO</shortName>
    </recommendedName>
</protein>
<accession>Q7PUJ5</accession>
<accession>Q8WR22</accession>
<keyword id="KW-0085">Behavior</keyword>
<keyword id="KW-0325">Glycoprotein</keyword>
<keyword id="KW-1185">Reference proteome</keyword>
<keyword id="KW-0964">Secreted</keyword>
<keyword id="KW-0732">Signal</keyword>
<proteinExistence type="evidence at protein level"/>